<name>PLAS_SOLLC</name>
<keyword id="KW-0150">Chloroplast</keyword>
<keyword id="KW-0186">Copper</keyword>
<keyword id="KW-0249">Electron transport</keyword>
<keyword id="KW-0472">Membrane</keyword>
<keyword id="KW-0479">Metal-binding</keyword>
<keyword id="KW-0934">Plastid</keyword>
<keyword id="KW-1185">Reference proteome</keyword>
<keyword id="KW-0793">Thylakoid</keyword>
<keyword id="KW-0809">Transit peptide</keyword>
<keyword id="KW-0813">Transport</keyword>
<dbReference type="EMBL" id="X13934">
    <property type="protein sequence ID" value="CAA32121.1"/>
    <property type="molecule type" value="mRNA"/>
</dbReference>
<dbReference type="PIR" id="S05303">
    <property type="entry name" value="S05303"/>
</dbReference>
<dbReference type="RefSeq" id="NP_001296192.1">
    <property type="nucleotide sequence ID" value="NM_001309263.1"/>
</dbReference>
<dbReference type="SMR" id="P17340"/>
<dbReference type="FunCoup" id="P17340">
    <property type="interactions" value="1265"/>
</dbReference>
<dbReference type="STRING" id="4081.P17340"/>
<dbReference type="PaxDb" id="4081-Solyc04g082010.1.1"/>
<dbReference type="EnsemblPlants" id="Solyc04g082010.1.1">
    <property type="protein sequence ID" value="Solyc04g082010.1.1.1"/>
    <property type="gene ID" value="Solyc04g082010.1"/>
</dbReference>
<dbReference type="GeneID" id="544053"/>
<dbReference type="Gramene" id="Solyc04g082010.1.1">
    <property type="protein sequence ID" value="Solyc04g082010.1.1.1"/>
    <property type="gene ID" value="Solyc04g082010.1"/>
</dbReference>
<dbReference type="KEGG" id="sly:544053"/>
<dbReference type="eggNOG" id="ENOG502RXIY">
    <property type="taxonomic scope" value="Eukaryota"/>
</dbReference>
<dbReference type="HOGENOM" id="CLU_084115_0_0_1"/>
<dbReference type="InParanoid" id="P17340"/>
<dbReference type="OMA" id="YDYYCEP"/>
<dbReference type="OrthoDB" id="197281at2759"/>
<dbReference type="PhylomeDB" id="P17340"/>
<dbReference type="Proteomes" id="UP000004994">
    <property type="component" value="Chromosome 4"/>
</dbReference>
<dbReference type="GO" id="GO:0009535">
    <property type="term" value="C:chloroplast thylakoid membrane"/>
    <property type="evidence" value="ECO:0007669"/>
    <property type="project" value="UniProtKB-SubCell"/>
</dbReference>
<dbReference type="GO" id="GO:0005507">
    <property type="term" value="F:copper ion binding"/>
    <property type="evidence" value="ECO:0007669"/>
    <property type="project" value="InterPro"/>
</dbReference>
<dbReference type="GO" id="GO:0009055">
    <property type="term" value="F:electron transfer activity"/>
    <property type="evidence" value="ECO:0007669"/>
    <property type="project" value="InterPro"/>
</dbReference>
<dbReference type="CDD" id="cd04219">
    <property type="entry name" value="Plastocyanin"/>
    <property type="match status" value="1"/>
</dbReference>
<dbReference type="Gene3D" id="2.60.40.420">
    <property type="entry name" value="Cupredoxins - blue copper proteins"/>
    <property type="match status" value="1"/>
</dbReference>
<dbReference type="InterPro" id="IPR000923">
    <property type="entry name" value="BlueCu_1"/>
</dbReference>
<dbReference type="InterPro" id="IPR028871">
    <property type="entry name" value="BlueCu_1_BS"/>
</dbReference>
<dbReference type="InterPro" id="IPR001235">
    <property type="entry name" value="Copper_blue_Plastocyanin"/>
</dbReference>
<dbReference type="InterPro" id="IPR008972">
    <property type="entry name" value="Cupredoxin"/>
</dbReference>
<dbReference type="InterPro" id="IPR002387">
    <property type="entry name" value="Plastocyanin"/>
</dbReference>
<dbReference type="NCBIfam" id="TIGR02656">
    <property type="entry name" value="cyanin_plasto"/>
    <property type="match status" value="1"/>
</dbReference>
<dbReference type="PANTHER" id="PTHR34192">
    <property type="entry name" value="PLASTOCYANIN MAJOR ISOFORM, CHLOROPLASTIC-RELATED"/>
    <property type="match status" value="1"/>
</dbReference>
<dbReference type="PANTHER" id="PTHR34192:SF10">
    <property type="entry name" value="PLASTOCYANIN MAJOR ISOFORM, CHLOROPLASTIC-RELATED"/>
    <property type="match status" value="1"/>
</dbReference>
<dbReference type="Pfam" id="PF00127">
    <property type="entry name" value="Copper-bind"/>
    <property type="match status" value="1"/>
</dbReference>
<dbReference type="PRINTS" id="PR00156">
    <property type="entry name" value="COPPERBLUE"/>
</dbReference>
<dbReference type="PRINTS" id="PR00157">
    <property type="entry name" value="PLASTOCYANIN"/>
</dbReference>
<dbReference type="SUPFAM" id="SSF49503">
    <property type="entry name" value="Cupredoxins"/>
    <property type="match status" value="1"/>
</dbReference>
<dbReference type="PROSITE" id="PS00196">
    <property type="entry name" value="COPPER_BLUE"/>
    <property type="match status" value="1"/>
</dbReference>
<feature type="transit peptide" description="Chloroplast" evidence="2">
    <location>
        <begin position="1"/>
        <end position="71"/>
    </location>
</feature>
<feature type="chain" id="PRO_0000002889" description="Plastocyanin, chloroplastic">
    <location>
        <begin position="72"/>
        <end position="170"/>
    </location>
</feature>
<feature type="domain" description="Plastocyanin-like">
    <location>
        <begin position="72"/>
        <end position="170"/>
    </location>
</feature>
<feature type="binding site" evidence="1">
    <location>
        <position position="108"/>
    </location>
    <ligand>
        <name>Cu cation</name>
        <dbReference type="ChEBI" id="CHEBI:23378"/>
    </ligand>
</feature>
<feature type="binding site" evidence="1">
    <location>
        <position position="155"/>
    </location>
    <ligand>
        <name>Cu cation</name>
        <dbReference type="ChEBI" id="CHEBI:23378"/>
    </ligand>
</feature>
<feature type="binding site" evidence="1">
    <location>
        <position position="158"/>
    </location>
    <ligand>
        <name>Cu cation</name>
        <dbReference type="ChEBI" id="CHEBI:23378"/>
    </ligand>
</feature>
<feature type="binding site" evidence="1">
    <location>
        <position position="163"/>
    </location>
    <ligand>
        <name>Cu cation</name>
        <dbReference type="ChEBI" id="CHEBI:23378"/>
    </ligand>
</feature>
<protein>
    <recommendedName>
        <fullName>Plastocyanin, chloroplastic</fullName>
    </recommendedName>
</protein>
<reference key="1">
    <citation type="journal article" date="1989" name="Nucleic Acids Res.">
        <title>Pre-plastocyanin from Lycopersicon esculentum.</title>
        <authorList>
            <person name="Detlefsen D.J."/>
            <person name="Pichersky E."/>
            <person name="Pecoraro V.L."/>
        </authorList>
    </citation>
    <scope>NUCLEOTIDE SEQUENCE [MRNA]</scope>
</reference>
<evidence type="ECO:0000250" key="1">
    <source>
        <dbReference type="UniProtKB" id="P18068"/>
    </source>
</evidence>
<evidence type="ECO:0000255" key="2"/>
<evidence type="ECO:0000305" key="3"/>
<organism>
    <name type="scientific">Solanum lycopersicum</name>
    <name type="common">Tomato</name>
    <name type="synonym">Lycopersicon esculentum</name>
    <dbReference type="NCBI Taxonomy" id="4081"/>
    <lineage>
        <taxon>Eukaryota</taxon>
        <taxon>Viridiplantae</taxon>
        <taxon>Streptophyta</taxon>
        <taxon>Embryophyta</taxon>
        <taxon>Tracheophyta</taxon>
        <taxon>Spermatophyta</taxon>
        <taxon>Magnoliopsida</taxon>
        <taxon>eudicotyledons</taxon>
        <taxon>Gunneridae</taxon>
        <taxon>Pentapetalae</taxon>
        <taxon>asterids</taxon>
        <taxon>lamiids</taxon>
        <taxon>Solanales</taxon>
        <taxon>Solanaceae</taxon>
        <taxon>Solanoideae</taxon>
        <taxon>Solaneae</taxon>
        <taxon>Solanum</taxon>
        <taxon>Solanum subgen. Lycopersicon</taxon>
    </lineage>
</organism>
<accession>P17340</accession>
<gene>
    <name type="primary">PETE</name>
</gene>
<sequence length="170" mass="16992">MATVTSAAVAIPSFTGLKAGASSSSRVSTGASAKVAAAPVARLTVKASLKDVGAVVAATAVSAMLASNAMALEVLLGGDDGSLAFIPGNFSVSAGEKITFKNNAGFPHNVVFDEDEIPAGVDASKISMSEEDLLNAAGETYSVTLSEKGTYTFYCAPHQGAGMVGKVTVN</sequence>
<comment type="function">
    <text evidence="1">Participates in electron transfer between P700 and the cytochrome b6-f complex in photosystem I.</text>
</comment>
<comment type="cofactor">
    <cofactor evidence="1">
        <name>Cu(2+)</name>
        <dbReference type="ChEBI" id="CHEBI:29036"/>
    </cofactor>
</comment>
<comment type="subcellular location">
    <subcellularLocation>
        <location evidence="1">Plastid</location>
        <location evidence="1">Chloroplast thylakoid membrane</location>
        <topology evidence="1">Peripheral membrane protein</topology>
        <orientation evidence="1">Lumenal side</orientation>
    </subcellularLocation>
    <text>Loosely bound to the inner thylakoid membrane surface in chloroplasts (By similarity).</text>
</comment>
<comment type="similarity">
    <text evidence="3">Belongs to the plastocyanin family.</text>
</comment>
<proteinExistence type="evidence at transcript level"/>